<protein>
    <recommendedName>
        <fullName>Alpha-amylase A type-3</fullName>
        <ecNumber evidence="4">3.2.1.1</ecNumber>
    </recommendedName>
    <alternativeName>
        <fullName>1,4-alpha-D-glucan glucanohydrolase</fullName>
    </alternativeName>
    <alternativeName>
        <fullName>Taka-amylase A</fullName>
        <shortName>TAA</shortName>
    </alternativeName>
</protein>
<name>AMYA3_ASPOR</name>
<sequence>MMVAWWSLFLYGLQVAAPALAATPADWRSQSIYFLLTDRFARTDGSTTATCNTADRKYCGGTWQGIIDKLDYIQGMGFTAIWITPVTAQLPQTTAYGDAYHGYWQQDIYSLNENYGTADDLKALSSALHERGMYLMVDVVANHMGYDGAGSSVDYSVFKPFSSQDYFHPFCLIQNYEDQTQVEDCWLGDNTVSLPDLDTTKDVVKNEWYDWVGSLVSNYSIDGLRIDTVKHVQKDFWPGYNKAAGVYCIGEVLDGDPAYTCPYQNVMDGVLNYPIYYPLLNAFKSTSGSMDDLYNMINTVKSDCPDSTLLGTFVENHDNPRFASYTNDIALAKNVAAFIILNDGIPIIYAGQEQHYAGGNDPANREATWLSGYPTDSELYKLIASANAIRNYAISKDTGFVTYKNWPIYKDDTTIAMRKGTDGSQIVTILSNKGASGDSYTLSLSGAGYTAGQQLTEVIGCTTVTVGSDGNVPVPMAGGLPRVLYPTEKLAGSKICSSS</sequence>
<dbReference type="EC" id="3.2.1.1" evidence="4"/>
<dbReference type="EMBL" id="X12727">
    <property type="protein sequence ID" value="CAA31220.1"/>
    <property type="molecule type" value="Genomic_DNA"/>
</dbReference>
<dbReference type="EMBL" id="M33218">
    <property type="protein sequence ID" value="AAA32708.1"/>
    <property type="molecule type" value="Genomic_DNA"/>
</dbReference>
<dbReference type="EMBL" id="AB021876">
    <property type="protein sequence ID" value="BAA95703.1"/>
    <property type="molecule type" value="Genomic_DNA"/>
</dbReference>
<dbReference type="EMBL" id="AP007155">
    <property type="status" value="NOT_ANNOTATED_CDS"/>
    <property type="molecule type" value="Genomic_DNA"/>
</dbReference>
<dbReference type="PIR" id="JN0588">
    <property type="entry name" value="JN0588"/>
</dbReference>
<dbReference type="PIR" id="S04549">
    <property type="entry name" value="ALAS3"/>
</dbReference>
<dbReference type="RefSeq" id="XP_003189619.1">
    <property type="nucleotide sequence ID" value="XM_003189571.1"/>
</dbReference>
<dbReference type="SMR" id="P0C1B4"/>
<dbReference type="STRING" id="510516.P0C1B4"/>
<dbReference type="Allergome" id="3133">
    <property type="allergen name" value="Asp o 21.0101"/>
</dbReference>
<dbReference type="Allergome" id="86">
    <property type="allergen name" value="Asp o 21"/>
</dbReference>
<dbReference type="CAZy" id="GH13">
    <property type="family name" value="Glycoside Hydrolase Family 13"/>
</dbReference>
<dbReference type="GlyCosmos" id="P0C1B4">
    <property type="glycosylation" value="1 site, No reported glycans"/>
</dbReference>
<dbReference type="VEuPathDB" id="FungiDB:AO090003001591"/>
<dbReference type="OMA" id="AHNWLFT"/>
<dbReference type="Proteomes" id="UP000006564">
    <property type="component" value="Chromosome 2"/>
</dbReference>
<dbReference type="GO" id="GO:0005576">
    <property type="term" value="C:extracellular region"/>
    <property type="evidence" value="ECO:0000314"/>
    <property type="project" value="AspGD"/>
</dbReference>
<dbReference type="GO" id="GO:0004556">
    <property type="term" value="F:alpha-amylase activity"/>
    <property type="evidence" value="ECO:0000316"/>
    <property type="project" value="AspGD"/>
</dbReference>
<dbReference type="GO" id="GO:0005509">
    <property type="term" value="F:calcium ion binding"/>
    <property type="evidence" value="ECO:0007669"/>
    <property type="project" value="InterPro"/>
</dbReference>
<dbReference type="GO" id="GO:0016052">
    <property type="term" value="P:carbohydrate catabolic process"/>
    <property type="evidence" value="ECO:0000316"/>
    <property type="project" value="AspGD"/>
</dbReference>
<dbReference type="CDD" id="cd11319">
    <property type="entry name" value="AmyAc_euk_AmyA"/>
    <property type="match status" value="1"/>
</dbReference>
<dbReference type="FunFam" id="2.60.40.1180:FF:000037">
    <property type="entry name" value="Alpha-amylase A"/>
    <property type="match status" value="1"/>
</dbReference>
<dbReference type="FunFam" id="3.20.20.80:FF:000120">
    <property type="entry name" value="Alpha-amylase A"/>
    <property type="match status" value="1"/>
</dbReference>
<dbReference type="Gene3D" id="3.20.20.80">
    <property type="entry name" value="Glycosidases"/>
    <property type="match status" value="1"/>
</dbReference>
<dbReference type="Gene3D" id="2.60.40.1180">
    <property type="entry name" value="Golgi alpha-mannosidase II"/>
    <property type="match status" value="1"/>
</dbReference>
<dbReference type="InterPro" id="IPR013777">
    <property type="entry name" value="A-amylase-like"/>
</dbReference>
<dbReference type="InterPro" id="IPR015340">
    <property type="entry name" value="A_amylase_C_dom"/>
</dbReference>
<dbReference type="InterPro" id="IPR006046">
    <property type="entry name" value="Alpha_amylase"/>
</dbReference>
<dbReference type="InterPro" id="IPR006047">
    <property type="entry name" value="Glyco_hydro_13_cat_dom"/>
</dbReference>
<dbReference type="InterPro" id="IPR013780">
    <property type="entry name" value="Glyco_hydro_b"/>
</dbReference>
<dbReference type="InterPro" id="IPR017853">
    <property type="entry name" value="Glycoside_hydrolase_SF"/>
</dbReference>
<dbReference type="PANTHER" id="PTHR10357:SF215">
    <property type="entry name" value="ALPHA-AMYLASE 1"/>
    <property type="match status" value="1"/>
</dbReference>
<dbReference type="PANTHER" id="PTHR10357">
    <property type="entry name" value="ALPHA-AMYLASE FAMILY MEMBER"/>
    <property type="match status" value="1"/>
</dbReference>
<dbReference type="Pfam" id="PF09260">
    <property type="entry name" value="A_amylase_dom_C"/>
    <property type="match status" value="1"/>
</dbReference>
<dbReference type="Pfam" id="PF00128">
    <property type="entry name" value="Alpha-amylase"/>
    <property type="match status" value="1"/>
</dbReference>
<dbReference type="PIRSF" id="PIRSF001024">
    <property type="entry name" value="Alph-amyl_fung"/>
    <property type="match status" value="1"/>
</dbReference>
<dbReference type="PRINTS" id="PR00110">
    <property type="entry name" value="ALPHAAMYLASE"/>
</dbReference>
<dbReference type="SMART" id="SM00642">
    <property type="entry name" value="Aamy"/>
    <property type="match status" value="1"/>
</dbReference>
<dbReference type="SUPFAM" id="SSF51445">
    <property type="entry name" value="(Trans)glycosidases"/>
    <property type="match status" value="1"/>
</dbReference>
<dbReference type="SUPFAM" id="SSF51011">
    <property type="entry name" value="Glycosyl hydrolase domain"/>
    <property type="match status" value="1"/>
</dbReference>
<proteinExistence type="inferred from homology"/>
<keyword id="KW-0106">Calcium</keyword>
<keyword id="KW-0119">Carbohydrate metabolism</keyword>
<keyword id="KW-1015">Disulfide bond</keyword>
<keyword id="KW-0325">Glycoprotein</keyword>
<keyword id="KW-0326">Glycosidase</keyword>
<keyword id="KW-0378">Hydrolase</keyword>
<keyword id="KW-0479">Metal-binding</keyword>
<keyword id="KW-1185">Reference proteome</keyword>
<keyword id="KW-0964">Secreted</keyword>
<keyword id="KW-0732">Signal</keyword>
<organism>
    <name type="scientific">Aspergillus oryzae (strain ATCC 42149 / RIB 40)</name>
    <name type="common">Yellow koji mold</name>
    <dbReference type="NCBI Taxonomy" id="510516"/>
    <lineage>
        <taxon>Eukaryota</taxon>
        <taxon>Fungi</taxon>
        <taxon>Dikarya</taxon>
        <taxon>Ascomycota</taxon>
        <taxon>Pezizomycotina</taxon>
        <taxon>Eurotiomycetes</taxon>
        <taxon>Eurotiomycetidae</taxon>
        <taxon>Eurotiales</taxon>
        <taxon>Aspergillaceae</taxon>
        <taxon>Aspergillus</taxon>
        <taxon>Aspergillus subgen. Circumdati</taxon>
    </lineage>
</organism>
<gene>
    <name type="primary">amy3</name>
    <name type="synonym">amyIII</name>
    <name type="synonym">Taa-G3</name>
    <name type="ORF">AO090003001210</name>
</gene>
<evidence type="ECO:0000250" key="1">
    <source>
        <dbReference type="UniProtKB" id="P0C1B3"/>
    </source>
</evidence>
<evidence type="ECO:0000250" key="2">
    <source>
        <dbReference type="UniProtKB" id="P56271"/>
    </source>
</evidence>
<evidence type="ECO:0000255" key="3"/>
<evidence type="ECO:0000305" key="4"/>
<comment type="catalytic activity">
    <reaction evidence="4">
        <text>Endohydrolysis of (1-&gt;4)-alpha-D-glucosidic linkages in polysaccharides containing three or more (1-&gt;4)-alpha-linked D-glucose units.</text>
        <dbReference type="EC" id="3.2.1.1"/>
    </reaction>
</comment>
<comment type="cofactor">
    <cofactor evidence="1">
        <name>Ca(2+)</name>
        <dbReference type="ChEBI" id="CHEBI:29108"/>
    </cofactor>
    <text evidence="1">Binds 2 calcium ions per subunit. Calcium is inhibitory at high concentrations.</text>
</comment>
<comment type="subunit">
    <text evidence="1">Monomer.</text>
</comment>
<comment type="subcellular location">
    <subcellularLocation>
        <location evidence="1">Secreted</location>
    </subcellularLocation>
</comment>
<comment type="similarity">
    <text evidence="4">Belongs to the glycosyl hydrolase 13 family.</text>
</comment>
<reference key="1">
    <citation type="journal article" date="1989" name="Mol. Microbiol.">
        <title>Three alpha-amylase genes of Aspergillus oryzae exhibit identical intron-exon organization.</title>
        <authorList>
            <person name="Wirsel S."/>
            <person name="Lachmund A."/>
            <person name="Wildhardt G."/>
            <person name="Ruttkowski E."/>
        </authorList>
    </citation>
    <scope>NUCLEOTIDE SEQUENCE [GENOMIC DNA]</scope>
    <source>
        <strain>DSM 63303</strain>
    </source>
</reference>
<reference key="2">
    <citation type="journal article" date="1989" name="Gene">
        <title>Aspergillus oryzae has two nearly identical Taka-amylase genes, each containing eight introns.</title>
        <authorList>
            <person name="Genes M.J."/>
            <person name="Dove M.J."/>
            <person name="Seligy V.L."/>
        </authorList>
    </citation>
    <scope>NUCLEOTIDE SEQUENCE [GENOMIC DNA]</scope>
</reference>
<reference key="3">
    <citation type="journal article" date="1989" name="Gene">
        <title>Isolation of a cDNA encoding Aspergillus oryzae Taka-amylase A: evidence for multiple related genes.</title>
        <authorList>
            <person name="Tsukagoshi N."/>
            <person name="Furukawa M."/>
            <person name="Nagaba H."/>
            <person name="Kirita N."/>
            <person name="Tsuboi A."/>
            <person name="Udaka S."/>
        </authorList>
    </citation>
    <scope>NUCLEOTIDE SEQUENCE [GENOMIC DNA]</scope>
</reference>
<reference key="4">
    <citation type="journal article" date="2000" name="Biosci. Biotechnol. Biochem.">
        <title>Molecular cloning and characterization of a transcriptional activator gene, amyR, involved in the amylolytic gene expression in Aspergillus oryzae.</title>
        <authorList>
            <person name="Gomi K."/>
            <person name="Akeno T."/>
            <person name="Minetoki T."/>
            <person name="Ozeki K."/>
            <person name="Kumagai C."/>
            <person name="Okazaki N."/>
            <person name="Iimura Y."/>
        </authorList>
    </citation>
    <scope>NUCLEOTIDE SEQUENCE [GENOMIC DNA]</scope>
    <source>
        <strain>ATCC 42149 / RIB 40</strain>
    </source>
</reference>
<reference key="5">
    <citation type="journal article" date="2005" name="Nature">
        <title>Genome sequencing and analysis of Aspergillus oryzae.</title>
        <authorList>
            <person name="Machida M."/>
            <person name="Asai K."/>
            <person name="Sano M."/>
            <person name="Tanaka T."/>
            <person name="Kumagai T."/>
            <person name="Terai G."/>
            <person name="Kusumoto K."/>
            <person name="Arima T."/>
            <person name="Akita O."/>
            <person name="Kashiwagi Y."/>
            <person name="Abe K."/>
            <person name="Gomi K."/>
            <person name="Horiuchi H."/>
            <person name="Kitamoto K."/>
            <person name="Kobayashi T."/>
            <person name="Takeuchi M."/>
            <person name="Denning D.W."/>
            <person name="Galagan J.E."/>
            <person name="Nierman W.C."/>
            <person name="Yu J."/>
            <person name="Archer D.B."/>
            <person name="Bennett J.W."/>
            <person name="Bhatnagar D."/>
            <person name="Cleveland T.E."/>
            <person name="Fedorova N.D."/>
            <person name="Gotoh O."/>
            <person name="Horikawa H."/>
            <person name="Hosoyama A."/>
            <person name="Ichinomiya M."/>
            <person name="Igarashi R."/>
            <person name="Iwashita K."/>
            <person name="Juvvadi P.R."/>
            <person name="Kato M."/>
            <person name="Kato Y."/>
            <person name="Kin T."/>
            <person name="Kokubun A."/>
            <person name="Maeda H."/>
            <person name="Maeyama N."/>
            <person name="Maruyama J."/>
            <person name="Nagasaki H."/>
            <person name="Nakajima T."/>
            <person name="Oda K."/>
            <person name="Okada K."/>
            <person name="Paulsen I."/>
            <person name="Sakamoto K."/>
            <person name="Sawano T."/>
            <person name="Takahashi M."/>
            <person name="Takase K."/>
            <person name="Terabayashi Y."/>
            <person name="Wortman J.R."/>
            <person name="Yamada O."/>
            <person name="Yamagata Y."/>
            <person name="Anazawa H."/>
            <person name="Hata Y."/>
            <person name="Koide Y."/>
            <person name="Komori T."/>
            <person name="Koyama Y."/>
            <person name="Minetoki T."/>
            <person name="Suharnan S."/>
            <person name="Tanaka A."/>
            <person name="Isono K."/>
            <person name="Kuhara S."/>
            <person name="Ogasawara N."/>
            <person name="Kikuchi H."/>
        </authorList>
    </citation>
    <scope>NUCLEOTIDE SEQUENCE [LARGE SCALE GENOMIC DNA]</scope>
    <source>
        <strain>ATCC 42149 / RIB 40</strain>
    </source>
</reference>
<feature type="signal peptide">
    <location>
        <begin position="1"/>
        <end position="21"/>
    </location>
</feature>
<feature type="chain" id="PRO_0000233271" description="Alpha-amylase A type-3">
    <location>
        <begin position="22"/>
        <end position="499"/>
    </location>
</feature>
<feature type="active site" description="Nucleophile" evidence="2">
    <location>
        <position position="227"/>
    </location>
</feature>
<feature type="active site" description="Proton donor" evidence="2">
    <location>
        <position position="251"/>
    </location>
</feature>
<feature type="binding site" evidence="1">
    <location>
        <position position="104"/>
    </location>
    <ligand>
        <name>substrate</name>
    </ligand>
</feature>
<feature type="binding site" evidence="1">
    <location>
        <position position="142"/>
    </location>
    <ligand>
        <name>Ca(2+)</name>
        <dbReference type="ChEBI" id="CHEBI:29108"/>
        <label>1</label>
    </ligand>
</feature>
<feature type="binding site" evidence="1">
    <location>
        <position position="143"/>
    </location>
    <ligand>
        <name>substrate</name>
    </ligand>
</feature>
<feature type="binding site" evidence="2">
    <location>
        <position position="183"/>
    </location>
    <ligand>
        <name>Ca(2+)</name>
        <dbReference type="ChEBI" id="CHEBI:29108"/>
        <label>1</label>
    </ligand>
</feature>
<feature type="binding site" evidence="2">
    <location>
        <position position="196"/>
    </location>
    <ligand>
        <name>Ca(2+)</name>
        <dbReference type="ChEBI" id="CHEBI:29108"/>
        <label>1</label>
    </ligand>
</feature>
<feature type="binding site" evidence="1">
    <location>
        <position position="225"/>
    </location>
    <ligand>
        <name>substrate</name>
    </ligand>
</feature>
<feature type="binding site" evidence="1">
    <location>
        <position position="227"/>
    </location>
    <ligand>
        <name>Ca(2+)</name>
        <dbReference type="ChEBI" id="CHEBI:29108"/>
        <label>2</label>
    </ligand>
</feature>
<feature type="binding site" evidence="1">
    <location>
        <begin position="230"/>
        <end position="231"/>
    </location>
    <ligand>
        <name>substrate</name>
    </ligand>
</feature>
<feature type="binding site" evidence="1">
    <location>
        <position position="231"/>
    </location>
    <ligand>
        <name>Ca(2+)</name>
        <dbReference type="ChEBI" id="CHEBI:29108"/>
        <label>1</label>
    </ligand>
</feature>
<feature type="binding site" evidence="1">
    <location>
        <position position="251"/>
    </location>
    <ligand>
        <name>Ca(2+)</name>
        <dbReference type="ChEBI" id="CHEBI:29108"/>
        <label>2</label>
    </ligand>
</feature>
<feature type="binding site" evidence="1">
    <location>
        <position position="255"/>
    </location>
    <ligand>
        <name>substrate</name>
    </ligand>
</feature>
<feature type="binding site" evidence="1">
    <location>
        <position position="365"/>
    </location>
    <ligand>
        <name>substrate</name>
    </ligand>
</feature>
<feature type="site" description="Transition state stabilizer" evidence="1">
    <location>
        <position position="318"/>
    </location>
</feature>
<feature type="glycosylation site" description="N-linked (GlcNAc...) asparagine" evidence="3">
    <location>
        <position position="218"/>
    </location>
</feature>
<feature type="disulfide bond" evidence="2">
    <location>
        <begin position="51"/>
        <end position="59"/>
    </location>
</feature>
<feature type="disulfide bond" evidence="2">
    <location>
        <begin position="171"/>
        <end position="185"/>
    </location>
</feature>
<feature type="disulfide bond" evidence="2">
    <location>
        <begin position="261"/>
        <end position="304"/>
    </location>
</feature>
<feature type="disulfide bond" evidence="2">
    <location>
        <begin position="461"/>
        <end position="496"/>
    </location>
</feature>
<feature type="sequence conflict" description="In Ref. 3; AAA32708." evidence="4" ref="3">
    <original>R</original>
    <variation>Q</variation>
    <location>
        <position position="56"/>
    </location>
</feature>
<feature type="sequence conflict" description="In Ref. 3; AAA32708." evidence="4" ref="3">
    <original>D</original>
    <variation>H</variation>
    <location>
        <position position="291"/>
    </location>
</feature>
<feature type="sequence conflict" description="In Ref. 3; AAA32708." evidence="4" ref="3">
    <original>L</original>
    <variation>A</variation>
    <location>
        <position position="370"/>
    </location>
</feature>
<accession>P0C1B4</accession>
<accession>P10529</accession>
<accession>P11763</accession>
<accession>Q00250</accession>
<accession>Q96TH4</accession>